<organism>
    <name type="scientific">Homo sapiens</name>
    <name type="common">Human</name>
    <dbReference type="NCBI Taxonomy" id="9606"/>
    <lineage>
        <taxon>Eukaryota</taxon>
        <taxon>Metazoa</taxon>
        <taxon>Chordata</taxon>
        <taxon>Craniata</taxon>
        <taxon>Vertebrata</taxon>
        <taxon>Euteleostomi</taxon>
        <taxon>Mammalia</taxon>
        <taxon>Eutheria</taxon>
        <taxon>Euarchontoglires</taxon>
        <taxon>Primates</taxon>
        <taxon>Haplorrhini</taxon>
        <taxon>Catarrhini</taxon>
        <taxon>Hominidae</taxon>
        <taxon>Homo</taxon>
    </lineage>
</organism>
<reference key="1">
    <citation type="submission" date="2002-04" db="EMBL/GenBank/DDBJ databases">
        <title>Cloning and characterization of TRIPIN: an inhibitor of TRIP function on TRAF2 mediated activation of NF-kB.</title>
        <authorList>
            <person name="Oliveira V."/>
            <person name="Fiorentino L."/>
            <person name="Chan H."/>
            <person name="Matsuzawa S."/>
            <person name="Chu Z."/>
            <person name="Saraiva M.J."/>
            <person name="Reed J.C."/>
        </authorList>
    </citation>
    <scope>NUCLEOTIDE SEQUENCE [MRNA] (ISOFORM 1)</scope>
    <scope>VARIANTS VAL-496 AND SER-660</scope>
</reference>
<reference key="2">
    <citation type="journal article" date="2004" name="Nat. Genet.">
        <title>Complete sequencing and characterization of 21,243 full-length human cDNAs.</title>
        <authorList>
            <person name="Ota T."/>
            <person name="Suzuki Y."/>
            <person name="Nishikawa T."/>
            <person name="Otsuki T."/>
            <person name="Sugiyama T."/>
            <person name="Irie R."/>
            <person name="Wakamatsu A."/>
            <person name="Hayashi K."/>
            <person name="Sato H."/>
            <person name="Nagai K."/>
            <person name="Kimura K."/>
            <person name="Makita H."/>
            <person name="Sekine M."/>
            <person name="Obayashi M."/>
            <person name="Nishi T."/>
            <person name="Shibahara T."/>
            <person name="Tanaka T."/>
            <person name="Ishii S."/>
            <person name="Yamamoto J."/>
            <person name="Saito K."/>
            <person name="Kawai Y."/>
            <person name="Isono Y."/>
            <person name="Nakamura Y."/>
            <person name="Nagahari K."/>
            <person name="Murakami K."/>
            <person name="Yasuda T."/>
            <person name="Iwayanagi T."/>
            <person name="Wagatsuma M."/>
            <person name="Shiratori A."/>
            <person name="Sudo H."/>
            <person name="Hosoiri T."/>
            <person name="Kaku Y."/>
            <person name="Kodaira H."/>
            <person name="Kondo H."/>
            <person name="Sugawara M."/>
            <person name="Takahashi M."/>
            <person name="Kanda K."/>
            <person name="Yokoi T."/>
            <person name="Furuya T."/>
            <person name="Kikkawa E."/>
            <person name="Omura Y."/>
            <person name="Abe K."/>
            <person name="Kamihara K."/>
            <person name="Katsuta N."/>
            <person name="Sato K."/>
            <person name="Tanikawa M."/>
            <person name="Yamazaki M."/>
            <person name="Ninomiya K."/>
            <person name="Ishibashi T."/>
            <person name="Yamashita H."/>
            <person name="Murakawa K."/>
            <person name="Fujimori K."/>
            <person name="Tanai H."/>
            <person name="Kimata M."/>
            <person name="Watanabe M."/>
            <person name="Hiraoka S."/>
            <person name="Chiba Y."/>
            <person name="Ishida S."/>
            <person name="Ono Y."/>
            <person name="Takiguchi S."/>
            <person name="Watanabe S."/>
            <person name="Yosida M."/>
            <person name="Hotuta T."/>
            <person name="Kusano J."/>
            <person name="Kanehori K."/>
            <person name="Takahashi-Fujii A."/>
            <person name="Hara H."/>
            <person name="Tanase T.-O."/>
            <person name="Nomura Y."/>
            <person name="Togiya S."/>
            <person name="Komai F."/>
            <person name="Hara R."/>
            <person name="Takeuchi K."/>
            <person name="Arita M."/>
            <person name="Imose N."/>
            <person name="Musashino K."/>
            <person name="Yuuki H."/>
            <person name="Oshima A."/>
            <person name="Sasaki N."/>
            <person name="Aotsuka S."/>
            <person name="Yoshikawa Y."/>
            <person name="Matsunawa H."/>
            <person name="Ichihara T."/>
            <person name="Shiohata N."/>
            <person name="Sano S."/>
            <person name="Moriya S."/>
            <person name="Momiyama H."/>
            <person name="Satoh N."/>
            <person name="Takami S."/>
            <person name="Terashima Y."/>
            <person name="Suzuki O."/>
            <person name="Nakagawa S."/>
            <person name="Senoh A."/>
            <person name="Mizoguchi H."/>
            <person name="Goto Y."/>
            <person name="Shimizu F."/>
            <person name="Wakebe H."/>
            <person name="Hishigaki H."/>
            <person name="Watanabe T."/>
            <person name="Sugiyama A."/>
            <person name="Takemoto M."/>
            <person name="Kawakami B."/>
            <person name="Yamazaki M."/>
            <person name="Watanabe K."/>
            <person name="Kumagai A."/>
            <person name="Itakura S."/>
            <person name="Fukuzumi Y."/>
            <person name="Fujimori Y."/>
            <person name="Komiyama M."/>
            <person name="Tashiro H."/>
            <person name="Tanigami A."/>
            <person name="Fujiwara T."/>
            <person name="Ono T."/>
            <person name="Yamada K."/>
            <person name="Fujii Y."/>
            <person name="Ozaki K."/>
            <person name="Hirao M."/>
            <person name="Ohmori Y."/>
            <person name="Kawabata A."/>
            <person name="Hikiji T."/>
            <person name="Kobatake N."/>
            <person name="Inagaki H."/>
            <person name="Ikema Y."/>
            <person name="Okamoto S."/>
            <person name="Okitani R."/>
            <person name="Kawakami T."/>
            <person name="Noguchi S."/>
            <person name="Itoh T."/>
            <person name="Shigeta K."/>
            <person name="Senba T."/>
            <person name="Matsumura K."/>
            <person name="Nakajima Y."/>
            <person name="Mizuno T."/>
            <person name="Morinaga M."/>
            <person name="Sasaki M."/>
            <person name="Togashi T."/>
            <person name="Oyama M."/>
            <person name="Hata H."/>
            <person name="Watanabe M."/>
            <person name="Komatsu T."/>
            <person name="Mizushima-Sugano J."/>
            <person name="Satoh T."/>
            <person name="Shirai Y."/>
            <person name="Takahashi Y."/>
            <person name="Nakagawa K."/>
            <person name="Okumura K."/>
            <person name="Nagase T."/>
            <person name="Nomura N."/>
            <person name="Kikuchi H."/>
            <person name="Masuho Y."/>
            <person name="Yamashita R."/>
            <person name="Nakai K."/>
            <person name="Yada T."/>
            <person name="Nakamura Y."/>
            <person name="Ohara O."/>
            <person name="Isogai T."/>
            <person name="Sugano S."/>
        </authorList>
    </citation>
    <scope>NUCLEOTIDE SEQUENCE [LARGE SCALE MRNA] (ISOFORM 2)</scope>
    <scope>NUCLEOTIDE SEQUENCE [LARGE SCALE MRNA] OF 698-1265 (ISOFORM 1)</scope>
</reference>
<reference key="3">
    <citation type="journal article" date="2007" name="BMC Genomics">
        <title>The full-ORF clone resource of the German cDNA consortium.</title>
        <authorList>
            <person name="Bechtel S."/>
            <person name="Rosenfelder H."/>
            <person name="Duda A."/>
            <person name="Schmidt C.P."/>
            <person name="Ernst U."/>
            <person name="Wellenreuther R."/>
            <person name="Mehrle A."/>
            <person name="Schuster C."/>
            <person name="Bahr A."/>
            <person name="Bloecker H."/>
            <person name="Heubner D."/>
            <person name="Hoerlein A."/>
            <person name="Michel G."/>
            <person name="Wedler H."/>
            <person name="Koehrer K."/>
            <person name="Ottenwaelder B."/>
            <person name="Poustka A."/>
            <person name="Wiemann S."/>
            <person name="Schupp I."/>
        </authorList>
    </citation>
    <scope>NUCLEOTIDE SEQUENCE [LARGE SCALE MRNA]</scope>
    <source>
        <tissue>Colon endothelium</tissue>
    </source>
</reference>
<reference key="4">
    <citation type="journal article" date="2005" name="Nature">
        <title>Generation and annotation of the DNA sequences of human chromosomes 2 and 4.</title>
        <authorList>
            <person name="Hillier L.W."/>
            <person name="Graves T.A."/>
            <person name="Fulton R.S."/>
            <person name="Fulton L.A."/>
            <person name="Pepin K.H."/>
            <person name="Minx P."/>
            <person name="Wagner-McPherson C."/>
            <person name="Layman D."/>
            <person name="Wylie K."/>
            <person name="Sekhon M."/>
            <person name="Becker M.C."/>
            <person name="Fewell G.A."/>
            <person name="Delehaunty K.D."/>
            <person name="Miner T.L."/>
            <person name="Nash W.E."/>
            <person name="Kremitzki C."/>
            <person name="Oddy L."/>
            <person name="Du H."/>
            <person name="Sun H."/>
            <person name="Bradshaw-Cordum H."/>
            <person name="Ali J."/>
            <person name="Carter J."/>
            <person name="Cordes M."/>
            <person name="Harris A."/>
            <person name="Isak A."/>
            <person name="van Brunt A."/>
            <person name="Nguyen C."/>
            <person name="Du F."/>
            <person name="Courtney L."/>
            <person name="Kalicki J."/>
            <person name="Ozersky P."/>
            <person name="Abbott S."/>
            <person name="Armstrong J."/>
            <person name="Belter E.A."/>
            <person name="Caruso L."/>
            <person name="Cedroni M."/>
            <person name="Cotton M."/>
            <person name="Davidson T."/>
            <person name="Desai A."/>
            <person name="Elliott G."/>
            <person name="Erb T."/>
            <person name="Fronick C."/>
            <person name="Gaige T."/>
            <person name="Haakenson W."/>
            <person name="Haglund K."/>
            <person name="Holmes A."/>
            <person name="Harkins R."/>
            <person name="Kim K."/>
            <person name="Kruchowski S.S."/>
            <person name="Strong C.M."/>
            <person name="Grewal N."/>
            <person name="Goyea E."/>
            <person name="Hou S."/>
            <person name="Levy A."/>
            <person name="Martinka S."/>
            <person name="Mead K."/>
            <person name="McLellan M.D."/>
            <person name="Meyer R."/>
            <person name="Randall-Maher J."/>
            <person name="Tomlinson C."/>
            <person name="Dauphin-Kohlberg S."/>
            <person name="Kozlowicz-Reilly A."/>
            <person name="Shah N."/>
            <person name="Swearengen-Shahid S."/>
            <person name="Snider J."/>
            <person name="Strong J.T."/>
            <person name="Thompson J."/>
            <person name="Yoakum M."/>
            <person name="Leonard S."/>
            <person name="Pearman C."/>
            <person name="Trani L."/>
            <person name="Radionenko M."/>
            <person name="Waligorski J.E."/>
            <person name="Wang C."/>
            <person name="Rock S.M."/>
            <person name="Tin-Wollam A.-M."/>
            <person name="Maupin R."/>
            <person name="Latreille P."/>
            <person name="Wendl M.C."/>
            <person name="Yang S.-P."/>
            <person name="Pohl C."/>
            <person name="Wallis J.W."/>
            <person name="Spieth J."/>
            <person name="Bieri T.A."/>
            <person name="Berkowicz N."/>
            <person name="Nelson J.O."/>
            <person name="Osborne J."/>
            <person name="Ding L."/>
            <person name="Meyer R."/>
            <person name="Sabo A."/>
            <person name="Shotland Y."/>
            <person name="Sinha P."/>
            <person name="Wohldmann P.E."/>
            <person name="Cook L.L."/>
            <person name="Hickenbotham M.T."/>
            <person name="Eldred J."/>
            <person name="Williams D."/>
            <person name="Jones T.A."/>
            <person name="She X."/>
            <person name="Ciccarelli F.D."/>
            <person name="Izaurralde E."/>
            <person name="Taylor J."/>
            <person name="Schmutz J."/>
            <person name="Myers R.M."/>
            <person name="Cox D.R."/>
            <person name="Huang X."/>
            <person name="McPherson J.D."/>
            <person name="Mardis E.R."/>
            <person name="Clifton S.W."/>
            <person name="Warren W.C."/>
            <person name="Chinwalla A.T."/>
            <person name="Eddy S.R."/>
            <person name="Marra M.A."/>
            <person name="Ovcharenko I."/>
            <person name="Furey T.S."/>
            <person name="Miller W."/>
            <person name="Eichler E.E."/>
            <person name="Bork P."/>
            <person name="Suyama M."/>
            <person name="Torrents D."/>
            <person name="Waterston R.H."/>
            <person name="Wilson R.K."/>
        </authorList>
    </citation>
    <scope>NUCLEOTIDE SEQUENCE [LARGE SCALE GENOMIC DNA]</scope>
</reference>
<reference key="5">
    <citation type="journal article" date="2004" name="Genome Res.">
        <title>The status, quality, and expansion of the NIH full-length cDNA project: the Mammalian Gene Collection (MGC).</title>
        <authorList>
            <consortium name="The MGC Project Team"/>
        </authorList>
    </citation>
    <scope>NUCLEOTIDE SEQUENCE [LARGE SCALE MRNA] (ISOFORMS 1 AND 3)</scope>
    <scope>VARIANT ASP-9</scope>
    <source>
        <tissue>Lymph</tissue>
        <tissue>Testis</tissue>
        <tissue>Uterus</tissue>
    </source>
</reference>
<reference key="6">
    <citation type="journal article" date="2006" name="Nature">
        <title>Shugoshin collaborates with protein phosphatase 2A to protect cohesin.</title>
        <authorList>
            <person name="Kitajima T.S."/>
            <person name="Sakuno T."/>
            <person name="Ishiguro K."/>
            <person name="Iemura S."/>
            <person name="Natsume T."/>
            <person name="Kawashima S.A."/>
            <person name="Watanabe Y."/>
        </authorList>
    </citation>
    <scope>FUNCTION</scope>
    <scope>SUBCELLULAR LOCATION</scope>
    <scope>INTERACTION WITH PPP2CA</scope>
</reference>
<reference key="7">
    <citation type="journal article" date="2007" name="J. Cell Biol.">
        <title>Tripin/hSgo2 recruits MCAK to the inner centromere to correct defective kinetochore attachments.</title>
        <authorList>
            <person name="Huang H."/>
            <person name="Feng J."/>
            <person name="Famulski J."/>
            <person name="Rattner J.B."/>
            <person name="Liu S.T."/>
            <person name="Kao G.D."/>
            <person name="Muschel R."/>
            <person name="Chan G.K."/>
            <person name="Yen T.J."/>
        </authorList>
    </citation>
    <scope>FUNCTION</scope>
    <scope>SUBCELLULAR LOCATION</scope>
    <scope>INTERACTION WITH PPP2CA</scope>
</reference>
<reference key="8">
    <citation type="journal article" date="2008" name="Proc. Natl. Acad. Sci. U.S.A.">
        <title>A quantitative atlas of mitotic phosphorylation.</title>
        <authorList>
            <person name="Dephoure N."/>
            <person name="Zhou C."/>
            <person name="Villen J."/>
            <person name="Beausoleil S.A."/>
            <person name="Bakalarski C.E."/>
            <person name="Elledge S.J."/>
            <person name="Gygi S.P."/>
        </authorList>
    </citation>
    <scope>PHOSPHORYLATION [LARGE SCALE ANALYSIS] AT SER-1144</scope>
    <scope>IDENTIFICATION BY MASS SPECTROMETRY [LARGE SCALE ANALYSIS]</scope>
    <source>
        <tissue>Cervix carcinoma</tissue>
    </source>
</reference>
<reference key="9">
    <citation type="journal article" date="2010" name="Nature">
        <title>Phosphorylation of the CPC by Cdk1 promotes chromosome bi-orientation.</title>
        <authorList>
            <person name="Tsukahara T."/>
            <person name="Tanno Y."/>
            <person name="Watanabe Y."/>
        </authorList>
    </citation>
    <scope>INTERACTION WITH CDCA8</scope>
    <scope>FUNCTION</scope>
</reference>
<reference key="10">
    <citation type="journal article" date="2011" name="J. Cell Biol.">
        <title>The astrin-kinastrin/SKAP complex localizes to microtubule plus ends and facilitates chromosome alignment.</title>
        <authorList>
            <person name="Dunsch A.K."/>
            <person name="Linnane E."/>
            <person name="Barr F.A."/>
            <person name="Gruneberg U."/>
        </authorList>
    </citation>
    <scope>IDENTIFICATION IN A COMPLEX WITH KNSTRN; SPAG5; PLK1; SGO2 AND DYNLL1</scope>
</reference>
<feature type="chain" id="PRO_0000055439" description="Shugoshin 2">
    <location>
        <begin position="1"/>
        <end position="1265"/>
    </location>
</feature>
<feature type="region of interest" description="Disordered" evidence="4">
    <location>
        <begin position="161"/>
        <end position="202"/>
    </location>
</feature>
<feature type="region of interest" description="Disordered" evidence="4">
    <location>
        <begin position="230"/>
        <end position="287"/>
    </location>
</feature>
<feature type="region of interest" description="Disordered" evidence="4">
    <location>
        <begin position="305"/>
        <end position="339"/>
    </location>
</feature>
<feature type="region of interest" description="Disordered" evidence="4">
    <location>
        <begin position="381"/>
        <end position="447"/>
    </location>
</feature>
<feature type="region of interest" description="Disordered" evidence="4">
    <location>
        <begin position="499"/>
        <end position="526"/>
    </location>
</feature>
<feature type="region of interest" description="Disordered" evidence="4">
    <location>
        <begin position="1073"/>
        <end position="1093"/>
    </location>
</feature>
<feature type="region of interest" description="Disordered" evidence="4">
    <location>
        <begin position="1200"/>
        <end position="1265"/>
    </location>
</feature>
<feature type="coiled-coil region" evidence="3">
    <location>
        <begin position="69"/>
        <end position="116"/>
    </location>
</feature>
<feature type="coiled-coil region" evidence="3">
    <location>
        <begin position="452"/>
        <end position="476"/>
    </location>
</feature>
<feature type="coiled-coil region" evidence="3">
    <location>
        <begin position="603"/>
        <end position="626"/>
    </location>
</feature>
<feature type="compositionally biased region" description="Polar residues" evidence="4">
    <location>
        <begin position="190"/>
        <end position="202"/>
    </location>
</feature>
<feature type="compositionally biased region" description="Basic and acidic residues" evidence="4">
    <location>
        <begin position="232"/>
        <end position="242"/>
    </location>
</feature>
<feature type="compositionally biased region" description="Polar residues" evidence="4">
    <location>
        <begin position="305"/>
        <end position="322"/>
    </location>
</feature>
<feature type="compositionally biased region" description="Basic and acidic residues" evidence="4">
    <location>
        <begin position="389"/>
        <end position="410"/>
    </location>
</feature>
<feature type="compositionally biased region" description="Basic and acidic residues" evidence="4">
    <location>
        <begin position="425"/>
        <end position="446"/>
    </location>
</feature>
<feature type="compositionally biased region" description="Polar residues" evidence="4">
    <location>
        <begin position="503"/>
        <end position="512"/>
    </location>
</feature>
<feature type="compositionally biased region" description="Basic residues" evidence="4">
    <location>
        <begin position="1073"/>
        <end position="1083"/>
    </location>
</feature>
<feature type="compositionally biased region" description="Polar residues" evidence="4">
    <location>
        <begin position="1217"/>
        <end position="1230"/>
    </location>
</feature>
<feature type="compositionally biased region" description="Basic and acidic residues" evidence="4">
    <location>
        <begin position="1231"/>
        <end position="1243"/>
    </location>
</feature>
<feature type="modified residue" description="Phosphoserine" evidence="16">
    <location>
        <position position="1144"/>
    </location>
</feature>
<feature type="splice variant" id="VSP_016798" description="In isoform 3." evidence="12">
    <original>ESHSHSDQSSKTS</original>
    <variation>GEIVLKIHFEYLY</variation>
    <location>
        <begin position="235"/>
        <end position="247"/>
    </location>
</feature>
<feature type="splice variant" id="VSP_016799" description="In isoform 3." evidence="12">
    <location>
        <begin position="248"/>
        <end position="1265"/>
    </location>
</feature>
<feature type="splice variant" id="VSP_016800" description="In isoform 2." evidence="11">
    <original>DKMRR</original>
    <variation>E</variation>
    <location>
        <begin position="1261"/>
        <end position="1265"/>
    </location>
</feature>
<feature type="sequence variant" id="VAR_024784" description="In dbSNP:rs1036533." evidence="5">
    <original>G</original>
    <variation>D</variation>
    <location>
        <position position="9"/>
    </location>
</feature>
<feature type="sequence variant" id="VAR_057178" description="In dbSNP:rs13417812.">
    <original>E</original>
    <variation>A</variation>
    <location>
        <position position="343"/>
    </location>
</feature>
<feature type="sequence variant" id="VAR_024785" description="In dbSNP:rs17448235." evidence="10">
    <original>I</original>
    <variation>V</variation>
    <location>
        <position position="496"/>
    </location>
</feature>
<feature type="sequence variant" id="VAR_057179" description="In dbSNP:rs17532665." evidence="10">
    <original>N</original>
    <variation>S</variation>
    <location>
        <position position="660"/>
    </location>
</feature>
<feature type="sequence variant" id="VAR_057180" description="In dbSNP:rs11896759.">
    <original>I</original>
    <variation>T</variation>
    <location>
        <position position="1099"/>
    </location>
</feature>
<feature type="sequence variant" id="VAR_057181" description="In dbSNP:rs16833776.">
    <original>H</original>
    <variation>R</variation>
    <location>
        <position position="1143"/>
    </location>
</feature>
<feature type="sequence conflict" description="In Ref. 3; BX647433." evidence="13" ref="3">
    <original>I</original>
    <variation>T</variation>
    <location>
        <position position="122"/>
    </location>
</feature>
<feature type="sequence conflict" description="In Ref. 3; BX647433." evidence="13" ref="3">
    <original>I</original>
    <variation>V</variation>
    <location>
        <position position="145"/>
    </location>
</feature>
<feature type="sequence conflict" description="In Ref. 1; AAM21971." evidence="13" ref="1">
    <original>S</original>
    <variation>R</variation>
    <location>
        <position position="193"/>
    </location>
</feature>
<feature type="sequence conflict" description="In Ref. 1; AAM21971." evidence="13" ref="1">
    <original>E</original>
    <variation>G</variation>
    <location>
        <position position="205"/>
    </location>
</feature>
<feature type="sequence conflict" description="In Ref. 1; AAM21971." evidence="13" ref="1">
    <original>N</original>
    <variation>H</variation>
    <location>
        <position position="215"/>
    </location>
</feature>
<feature type="sequence conflict" description="In Ref. 1; AAM21971." evidence="13" ref="1">
    <original>FI</original>
    <variation>LF</variation>
    <location>
        <begin position="450"/>
        <end position="451"/>
    </location>
</feature>
<feature type="sequence conflict" description="In Ref. 2; BAB71617." evidence="13" ref="2">
    <original>T</original>
    <variation>A</variation>
    <location>
        <position position="1243"/>
    </location>
</feature>
<name>SGO2_HUMAN</name>
<comment type="function">
    <text evidence="1 6 7 8">Cooperates with PPP2CA to protect centromeric cohesin from separase-mediated cleavage in oocytes specifically during meiosis I. Has a crucial role in protecting REC8 at centromeres from cleavage by separase. During meiosis, protects centromeric cohesion complexes until metaphase II/anaphase II transition, preventing premature release of meiosis-specific REC8 cohesin complexes from anaphase I centromeres. Is thus essential for an accurate gametogenesis. May act by targeting PPP2CA to centromeres, thus leading to cohesin dephosphorylation (By similarity). Essential for recruiting KIF2C to the inner centromere and for correcting defective kinetochore attachments. Involved in centromeric enrichment of AUKRB in prometaphase.</text>
</comment>
<comment type="subunit">
    <text evidence="6 7 8 9">Part of an astrin (SPAG5) -kinastrin (SKAP) complex containing KNSTRN, SPAG5, PLK1, DYNLL1 and SGO2 (PubMed:21402792). Interacts with CDCA8 (PubMed:20739936). Directly interacts with PPP2CA (PubMed:16541025, PubMed:17485487).</text>
</comment>
<comment type="interaction">
    <interactant intactId="EBI-989213">
        <id>Q562F6</id>
    </interactant>
    <interactant intactId="EBI-979174">
        <id>Q53HL2</id>
        <label>CDCA8</label>
    </interactant>
    <organismsDiffer>false</organismsDiffer>
    <experiments>3</experiments>
</comment>
<comment type="interaction">
    <interactant intactId="EBI-989213">
        <id>Q562F6</id>
    </interactant>
    <interactant intactId="EBI-78203">
        <id>Q13257</id>
        <label>MAD2L1</label>
    </interactant>
    <organismsDiffer>false</organismsDiffer>
    <experiments>11</experiments>
</comment>
<comment type="interaction">
    <interactant intactId="EBI-989213">
        <id>Q562F6</id>
    </interactant>
    <interactant intactId="EBI-712181">
        <id>Q15013</id>
        <label>MAD2L1BP</label>
    </interactant>
    <organismsDiffer>false</organismsDiffer>
    <experiments>2</experiments>
</comment>
<comment type="interaction">
    <interactant intactId="EBI-989213">
        <id>Q562F6</id>
    </interactant>
    <interactant intactId="EBI-357253">
        <id>P62136</id>
        <label>PPP1CA</label>
    </interactant>
    <organismsDiffer>false</organismsDiffer>
    <experiments>4</experiments>
</comment>
<comment type="interaction">
    <interactant intactId="EBI-989213">
        <id>Q562F6</id>
    </interactant>
    <interactant intactId="EBI-712311">
        <id>P67775</id>
        <label>PPP2CA</label>
    </interactant>
    <organismsDiffer>false</organismsDiffer>
    <experiments>2</experiments>
</comment>
<comment type="interaction">
    <interactant intactId="EBI-989213">
        <id>Q562F6</id>
    </interactant>
    <interactant intactId="EBI-641666">
        <id>Q15172</id>
        <label>PPP2R5A</label>
    </interactant>
    <organismsDiffer>false</organismsDiffer>
    <experiments>3</experiments>
</comment>
<comment type="interaction">
    <interactant intactId="EBI-12111430">
        <id>Q562F6-3</id>
    </interactant>
    <interactant intactId="EBI-7481343">
        <id>Q01105-2</id>
        <label>SET</label>
    </interactant>
    <organismsDiffer>false</organismsDiffer>
    <experiments>3</experiments>
</comment>
<comment type="subcellular location">
    <subcellularLocation>
        <location evidence="14">Nucleus</location>
    </subcellularLocation>
    <subcellularLocation>
        <location evidence="7">Chromosome</location>
        <location evidence="7">Centromere</location>
    </subcellularLocation>
    <subcellularLocation>
        <location evidence="2">Chromosome</location>
        <location evidence="2">Centromere</location>
        <location evidence="2">Kinetochore</location>
    </subcellularLocation>
    <text evidence="2 7">During meiosis I, accumulates at centromeres during diplotene, and colocalizes differentially with the cohesin subunits RAD21 and REC8 at metaphase I centromeres (By similarity). SGO2 and RAD21 change their relative distributions during telophase I when sister-kinetochore association is lost (By similarity). During meiosis II, it shows a striking tension-dependent redistribution within centromeres throughout chromosome congression during prometaphase II, as it does during mitosis (By similarity). In Hela cells, localizes at centromeres throughout prophase until metaphase and disappears at anaphase (PubMed:17485487). Centromeric localization requires the presence of BUB1 and AUKRB (PubMed:17485487).</text>
</comment>
<comment type="alternative products">
    <event type="alternative splicing"/>
    <isoform>
        <id>Q562F6-1</id>
        <name>1</name>
        <sequence type="displayed"/>
    </isoform>
    <isoform>
        <id>Q562F6-2</id>
        <name>2</name>
        <sequence type="described" ref="VSP_016800"/>
    </isoform>
    <isoform>
        <id>Q562F6-3</id>
        <name>3</name>
        <sequence type="described" ref="VSP_016798 VSP_016799"/>
    </isoform>
</comment>
<comment type="miscellaneous">
    <text>Shugoshin is Japanese for guardian spirit (as it is known to be a protector of centromeric cohesin).</text>
</comment>
<comment type="similarity">
    <text evidence="13">Belongs to the shugoshin family.</text>
</comment>
<comment type="sequence caution" evidence="13">
    <conflict type="miscellaneous discrepancy">
        <sequence resource="EMBL-CDS" id="AAH35764"/>
    </conflict>
    <text>Contaminating sequence. Potential poly-A sequence.</text>
</comment>
<comment type="sequence caution" evidence="13">
    <conflict type="erroneous initiation">
        <sequence resource="EMBL-CDS" id="BAB71617"/>
    </conflict>
    <text>Truncated N-terminus.</text>
</comment>
<comment type="sequence caution" evidence="13">
    <conflict type="frameshift">
        <sequence resource="EMBL-CDS" id="BAC04524"/>
    </conflict>
</comment>
<gene>
    <name evidence="15" type="primary">SGO2</name>
    <name type="synonym">SGOL2</name>
</gene>
<evidence type="ECO:0000250" key="1"/>
<evidence type="ECO:0000250" key="2">
    <source>
        <dbReference type="UniProtKB" id="Q7TSY8"/>
    </source>
</evidence>
<evidence type="ECO:0000255" key="3"/>
<evidence type="ECO:0000256" key="4">
    <source>
        <dbReference type="SAM" id="MobiDB-lite"/>
    </source>
</evidence>
<evidence type="ECO:0000269" key="5">
    <source>
    </source>
</evidence>
<evidence type="ECO:0000269" key="6">
    <source>
    </source>
</evidence>
<evidence type="ECO:0000269" key="7">
    <source>
    </source>
</evidence>
<evidence type="ECO:0000269" key="8">
    <source>
    </source>
</evidence>
<evidence type="ECO:0000269" key="9">
    <source>
    </source>
</evidence>
<evidence type="ECO:0000269" key="10">
    <source ref="1"/>
</evidence>
<evidence type="ECO:0000303" key="11">
    <source>
    </source>
</evidence>
<evidence type="ECO:0000303" key="12">
    <source>
    </source>
</evidence>
<evidence type="ECO:0000305" key="13"/>
<evidence type="ECO:0000305" key="14">
    <source>
    </source>
</evidence>
<evidence type="ECO:0000312" key="15">
    <source>
        <dbReference type="HGNC" id="HGNC:30812"/>
    </source>
</evidence>
<evidence type="ECO:0007744" key="16">
    <source>
    </source>
</evidence>
<protein>
    <recommendedName>
        <fullName evidence="15">Shugoshin 2</fullName>
    </recommendedName>
    <alternativeName>
        <fullName>Shugoshin-2</fullName>
    </alternativeName>
    <alternativeName>
        <fullName>Shugoshin-like 2</fullName>
    </alternativeName>
    <alternativeName>
        <fullName>Tripin</fullName>
    </alternativeName>
</protein>
<keyword id="KW-0025">Alternative splicing</keyword>
<keyword id="KW-0131">Cell cycle</keyword>
<keyword id="KW-0132">Cell division</keyword>
<keyword id="KW-0137">Centromere</keyword>
<keyword id="KW-0158">Chromosome</keyword>
<keyword id="KW-0159">Chromosome partition</keyword>
<keyword id="KW-0175">Coiled coil</keyword>
<keyword id="KW-0995">Kinetochore</keyword>
<keyword id="KW-0469">Meiosis</keyword>
<keyword id="KW-0539">Nucleus</keyword>
<keyword id="KW-0597">Phosphoprotein</keyword>
<keyword id="KW-1267">Proteomics identification</keyword>
<keyword id="KW-1185">Reference proteome</keyword>
<dbReference type="EMBL" id="AY094614">
    <property type="protein sequence ID" value="AAM21971.1"/>
    <property type="molecule type" value="mRNA"/>
</dbReference>
<dbReference type="EMBL" id="AK057940">
    <property type="protein sequence ID" value="BAB71617.1"/>
    <property type="status" value="ALT_INIT"/>
    <property type="molecule type" value="mRNA"/>
</dbReference>
<dbReference type="EMBL" id="AK095291">
    <property type="protein sequence ID" value="BAC04524.1"/>
    <property type="status" value="ALT_FRAME"/>
    <property type="molecule type" value="mRNA"/>
</dbReference>
<dbReference type="EMBL" id="BX647433">
    <property type="status" value="NOT_ANNOTATED_CDS"/>
    <property type="molecule type" value="mRNA"/>
</dbReference>
<dbReference type="EMBL" id="AC012459">
    <property type="protein sequence ID" value="AAY24310.1"/>
    <property type="molecule type" value="Genomic_DNA"/>
</dbReference>
<dbReference type="EMBL" id="AC080164">
    <property type="protein sequence ID" value="AAY24264.1"/>
    <property type="molecule type" value="Genomic_DNA"/>
</dbReference>
<dbReference type="EMBL" id="BC035764">
    <property type="protein sequence ID" value="AAH35764.1"/>
    <property type="status" value="ALT_SEQ"/>
    <property type="molecule type" value="mRNA"/>
</dbReference>
<dbReference type="EMBL" id="BC048349">
    <property type="protein sequence ID" value="AAH48349.1"/>
    <property type="molecule type" value="mRNA"/>
</dbReference>
<dbReference type="EMBL" id="BC092412">
    <property type="protein sequence ID" value="AAH92412.1"/>
    <property type="molecule type" value="mRNA"/>
</dbReference>
<dbReference type="CCDS" id="CCDS42796.1">
    <molecule id="Q562F6-1"/>
</dbReference>
<dbReference type="RefSeq" id="NP_001153518.1">
    <molecule id="Q562F6-2"/>
    <property type="nucleotide sequence ID" value="NM_001160046.1"/>
</dbReference>
<dbReference type="RefSeq" id="NP_689737.4">
    <molecule id="Q562F6-1"/>
    <property type="nucleotide sequence ID" value="NM_152524.6"/>
</dbReference>
<dbReference type="RefSeq" id="XP_005246402.1">
    <molecule id="Q562F6-1"/>
    <property type="nucleotide sequence ID" value="XM_005246345.5"/>
</dbReference>
<dbReference type="RefSeq" id="XP_011509036.1">
    <property type="nucleotide sequence ID" value="XM_011510734.2"/>
</dbReference>
<dbReference type="RefSeq" id="XP_047299459.1">
    <molecule id="Q562F6-1"/>
    <property type="nucleotide sequence ID" value="XM_047443503.1"/>
</dbReference>
<dbReference type="SMR" id="Q562F6"/>
<dbReference type="BioGRID" id="127357">
    <property type="interactions" value="75"/>
</dbReference>
<dbReference type="CORUM" id="Q562F6"/>
<dbReference type="DIP" id="DIP-36615N"/>
<dbReference type="FunCoup" id="Q562F6">
    <property type="interactions" value="1188"/>
</dbReference>
<dbReference type="IntAct" id="Q562F6">
    <property type="interactions" value="63"/>
</dbReference>
<dbReference type="MINT" id="Q562F6"/>
<dbReference type="STRING" id="9606.ENSP00000350447"/>
<dbReference type="GlyGen" id="Q562F6">
    <property type="glycosylation" value="1 site, 1 O-linked glycan (1 site)"/>
</dbReference>
<dbReference type="iPTMnet" id="Q562F6"/>
<dbReference type="PhosphoSitePlus" id="Q562F6"/>
<dbReference type="BioMuta" id="SGO2"/>
<dbReference type="DMDM" id="85542144"/>
<dbReference type="CPTAC" id="CPTAC-946"/>
<dbReference type="jPOST" id="Q562F6"/>
<dbReference type="MassIVE" id="Q562F6"/>
<dbReference type="PaxDb" id="9606-ENSP00000350447"/>
<dbReference type="PeptideAtlas" id="Q562F6"/>
<dbReference type="ProteomicsDB" id="62559">
    <molecule id="Q562F6-1"/>
</dbReference>
<dbReference type="ProteomicsDB" id="62560">
    <molecule id="Q562F6-2"/>
</dbReference>
<dbReference type="ProteomicsDB" id="62561">
    <molecule id="Q562F6-3"/>
</dbReference>
<dbReference type="Pumba" id="Q562F6"/>
<dbReference type="Antibodypedia" id="34099">
    <property type="antibodies" value="109 antibodies from 24 providers"/>
</dbReference>
<dbReference type="DNASU" id="151246"/>
<dbReference type="Ensembl" id="ENST00000357799.9">
    <molecule id="Q562F6-1"/>
    <property type="protein sequence ID" value="ENSP00000350447.4"/>
    <property type="gene ID" value="ENSG00000163535.18"/>
</dbReference>
<dbReference type="Ensembl" id="ENST00000409203.3">
    <molecule id="Q562F6-3"/>
    <property type="protein sequence ID" value="ENSP00000386249.3"/>
    <property type="gene ID" value="ENSG00000163535.18"/>
</dbReference>
<dbReference type="GeneID" id="151246"/>
<dbReference type="KEGG" id="hsa:151246"/>
<dbReference type="MANE-Select" id="ENST00000357799.9">
    <property type="protein sequence ID" value="ENSP00000350447.4"/>
    <property type="RefSeq nucleotide sequence ID" value="NM_152524.6"/>
    <property type="RefSeq protein sequence ID" value="NP_689737.4"/>
</dbReference>
<dbReference type="UCSC" id="uc002uvv.5">
    <molecule id="Q562F6-1"/>
    <property type="organism name" value="human"/>
</dbReference>
<dbReference type="AGR" id="HGNC:30812"/>
<dbReference type="CTD" id="151246"/>
<dbReference type="DisGeNET" id="151246"/>
<dbReference type="GeneCards" id="SGO2"/>
<dbReference type="HGNC" id="HGNC:30812">
    <property type="gene designation" value="SGO2"/>
</dbReference>
<dbReference type="HPA" id="ENSG00000163535">
    <property type="expression patterns" value="Tissue enhanced (lymphoid tissue, testis)"/>
</dbReference>
<dbReference type="MalaCards" id="SGO2"/>
<dbReference type="MIM" id="612425">
    <property type="type" value="gene"/>
</dbReference>
<dbReference type="neXtProt" id="NX_Q562F6"/>
<dbReference type="OpenTargets" id="ENSG00000163535"/>
<dbReference type="PharmGKB" id="PA134901462"/>
<dbReference type="VEuPathDB" id="HostDB:ENSG00000163535"/>
<dbReference type="eggNOG" id="ENOG502S9Y1">
    <property type="taxonomic scope" value="Eukaryota"/>
</dbReference>
<dbReference type="GeneTree" id="ENSGT00940000154107"/>
<dbReference type="HOGENOM" id="CLU_264434_0_0_1"/>
<dbReference type="InParanoid" id="Q562F6"/>
<dbReference type="OMA" id="LNWNNEI"/>
<dbReference type="OrthoDB" id="5990092at2759"/>
<dbReference type="PAN-GO" id="Q562F6">
    <property type="GO annotations" value="4 GO annotations based on evolutionary models"/>
</dbReference>
<dbReference type="PhylomeDB" id="Q562F6"/>
<dbReference type="TreeFam" id="TF350100"/>
<dbReference type="PathwayCommons" id="Q562F6"/>
<dbReference type="Reactome" id="R-HSA-141444">
    <property type="pathway name" value="Amplification of signal from unattached kinetochores via a MAD2 inhibitory signal"/>
</dbReference>
<dbReference type="Reactome" id="R-HSA-2467813">
    <property type="pathway name" value="Separation of Sister Chromatids"/>
</dbReference>
<dbReference type="Reactome" id="R-HSA-2500257">
    <property type="pathway name" value="Resolution of Sister Chromatid Cohesion"/>
</dbReference>
<dbReference type="Reactome" id="R-HSA-5663220">
    <property type="pathway name" value="RHO GTPases Activate Formins"/>
</dbReference>
<dbReference type="Reactome" id="R-HSA-68877">
    <property type="pathway name" value="Mitotic Prometaphase"/>
</dbReference>
<dbReference type="Reactome" id="R-HSA-9648025">
    <property type="pathway name" value="EML4 and NUDC in mitotic spindle formation"/>
</dbReference>
<dbReference type="SignaLink" id="Q562F6"/>
<dbReference type="BioGRID-ORCS" id="151246">
    <property type="hits" value="49 hits in 1156 CRISPR screens"/>
</dbReference>
<dbReference type="ChiTaRS" id="SGO2">
    <property type="organism name" value="human"/>
</dbReference>
<dbReference type="GeneWiki" id="SGOL2"/>
<dbReference type="GenomeRNAi" id="151246"/>
<dbReference type="Pharos" id="Q562F6">
    <property type="development level" value="Tbio"/>
</dbReference>
<dbReference type="PRO" id="PR:Q562F6"/>
<dbReference type="Proteomes" id="UP000005640">
    <property type="component" value="Chromosome 2"/>
</dbReference>
<dbReference type="RNAct" id="Q562F6">
    <property type="molecule type" value="protein"/>
</dbReference>
<dbReference type="Bgee" id="ENSG00000163535">
    <property type="expression patterns" value="Expressed in oocyte and 159 other cell types or tissues"/>
</dbReference>
<dbReference type="ExpressionAtlas" id="Q562F6">
    <property type="expression patterns" value="baseline and differential"/>
</dbReference>
<dbReference type="GO" id="GO:0000775">
    <property type="term" value="C:chromosome, centromeric region"/>
    <property type="evidence" value="ECO:0000314"/>
    <property type="project" value="UniProtKB"/>
</dbReference>
<dbReference type="GO" id="GO:0005829">
    <property type="term" value="C:cytosol"/>
    <property type="evidence" value="ECO:0000304"/>
    <property type="project" value="Reactome"/>
</dbReference>
<dbReference type="GO" id="GO:0000776">
    <property type="term" value="C:kinetochore"/>
    <property type="evidence" value="ECO:0000318"/>
    <property type="project" value="GO_Central"/>
</dbReference>
<dbReference type="GO" id="GO:0030892">
    <property type="term" value="C:mitotic cohesin complex"/>
    <property type="evidence" value="ECO:0000314"/>
    <property type="project" value="MGI"/>
</dbReference>
<dbReference type="GO" id="GO:0016604">
    <property type="term" value="C:nuclear body"/>
    <property type="evidence" value="ECO:0000314"/>
    <property type="project" value="HPA"/>
</dbReference>
<dbReference type="GO" id="GO:0005654">
    <property type="term" value="C:nucleoplasm"/>
    <property type="evidence" value="ECO:0000314"/>
    <property type="project" value="HPA"/>
</dbReference>
<dbReference type="GO" id="GO:0051301">
    <property type="term" value="P:cell division"/>
    <property type="evidence" value="ECO:0007669"/>
    <property type="project" value="UniProtKB-KW"/>
</dbReference>
<dbReference type="GO" id="GO:0007059">
    <property type="term" value="P:chromosome segregation"/>
    <property type="evidence" value="ECO:0007669"/>
    <property type="project" value="UniProtKB-KW"/>
</dbReference>
<dbReference type="GO" id="GO:0051321">
    <property type="term" value="P:meiotic cell cycle"/>
    <property type="evidence" value="ECO:0007669"/>
    <property type="project" value="UniProtKB-KW"/>
</dbReference>
<dbReference type="GO" id="GO:0051177">
    <property type="term" value="P:meiotic sister chromatid cohesion"/>
    <property type="evidence" value="ECO:0000318"/>
    <property type="project" value="GO_Central"/>
</dbReference>
<dbReference type="InterPro" id="IPR038889">
    <property type="entry name" value="Shugoshin1/2"/>
</dbReference>
<dbReference type="PANTHER" id="PTHR21577">
    <property type="entry name" value="SHUGOSHIN"/>
    <property type="match status" value="1"/>
</dbReference>
<dbReference type="PANTHER" id="PTHR21577:SF3">
    <property type="entry name" value="SHUGOSHIN 1-RELATED"/>
    <property type="match status" value="1"/>
</dbReference>
<proteinExistence type="evidence at protein level"/>
<sequence length="1265" mass="144739">MECPVMETGSLFTSGIKRHLKDKRISKTTKLNVSLASKIKTKILNNSSIFKISLKHNNRALAQALSREKENSRRITTEKMLLQKEVEKLNFENTFLRLKLNNLNKKLIDIEALMNNNLITAIEMSSLSEFHQSSFLLSASKKKRISKQCKLMRLPFARVPLTSNDDEDEDKEKMQCDNNIKSKTLPDIPSSGSTTQPLSTQDNSEVLFLKENNQNVYGLDDSEHISSIVDVPPRESHSHSDQSSKTSLMSEMRNAQSIGRRWEKPSPSNVTERKKRGSSWESNNLSADTPCATVLDKQHISSPELNCNNEINGHTNETNTEMQRNKQDLPGLSSESAREPNAECMNQIEDNDDFQLQKTVYDADMDLTASEVSKIVTVSTGIKKKSNKKTNEHGMKTFRKVKDSSSEKKRERSKRQFKNSSDVDIGEKIENRTERSDVLDGKRGAEDPGFIFNNEQLAQMNEQLAQVNELKKMTLQTGFEQGDRENVLCNKKEKRITNEQEETYSLSQSSGKFHQESKFDKGQNSLTCNKSKASRQTFVIHKLEKDNLLPNQKDKVTIYENLDVTNEFHTANLSTKDNGNLCDYGTHNILDLKKYVTDIQPSEQNESNINKLRKKVNRKTEIISGMNHMYEDNDKDVVHGLKKGNFFFKTQEDKEPISENIEVSKELQIPALSTRDNENQCDYRTQNVLGLQKQITNMYPVQQNESKVNKKLRQKVNRKTEIISEVNHLDNDKSIEYTVKSHSLFLTQKDKEIIPGNLEDPSEFETPALSTKDSGNLYDSEIQNVLGVKHGHDMQPACQNDSKIGKKPRLNVCQKSEIIPETNQIYENDNKGVHDLEKDNFFSLTPKDKETISENLQVTNEFQTVDLLIKDNGNLCDYDTQNILELKKYVTDRKSAEQNESKINKLRNKVNWKTEIISEMNQIYEDNDKDAHVQESYTKDLDFKVNKSKQKLECQDIINKHYMEVNSNEKESCDQILDSYKVVKKRKKESSCKAKNILTKAKNKLASQLTESSQTSISLESDLKHITSEADSDPGNPVELCKTQKQSTTTLNKKDLPFVEEIKEGECQVKKVNKMTSKSKKRKTSIDPSPESHEVMERILDSVQGKSTVSEQADKENNLENEKMVKNKPDFYTKAFRSLSEIHSPNIQDSSFDSVREGLVPLSVSSGKNVIIKENFALECSPAFQVSDDEHEKMNKMKFKVNRRTQKSGIGDRPLQDLSNTSFVSNNTAESENKSEDLSSERTSRRRRCTPFYFKEPSLRDKMRR</sequence>
<accession>Q562F6</accession>
<accession>Q53RR9</accession>
<accession>Q53T20</accession>
<accession>Q86XY4</accession>
<accession>Q8IWK2</accession>
<accession>Q8IZK1</accession>
<accession>Q8N1Q5</accession>
<accession>Q96LQ3</accession>